<name>CLPS_SHIBS</name>
<comment type="function">
    <text evidence="1">Involved in the modulation of the specificity of the ClpAP-mediated ATP-dependent protein degradation.</text>
</comment>
<comment type="subunit">
    <text evidence="1">Binds to the N-terminal domain of the chaperone ClpA.</text>
</comment>
<comment type="similarity">
    <text evidence="1">Belongs to the ClpS family.</text>
</comment>
<proteinExistence type="inferred from homology"/>
<sequence>MGKTNDWLDFDQLAEEKVRDALKPPSMYKVILVNDDYTPMEFVIDVLQKFFSYDVERATQLMLAVHYQGKAICGVFTAEVAETKVAMVNKYARENEHPLLCTLEKA</sequence>
<evidence type="ECO:0000255" key="1">
    <source>
        <dbReference type="HAMAP-Rule" id="MF_00302"/>
    </source>
</evidence>
<dbReference type="EMBL" id="CP000036">
    <property type="protein sequence ID" value="ABB65487.1"/>
    <property type="molecule type" value="Genomic_DNA"/>
</dbReference>
<dbReference type="RefSeq" id="WP_000520781.1">
    <property type="nucleotide sequence ID" value="NC_007613.1"/>
</dbReference>
<dbReference type="SMR" id="Q323M1"/>
<dbReference type="GeneID" id="86863397"/>
<dbReference type="KEGG" id="sbo:SBO_0814"/>
<dbReference type="HOGENOM" id="CLU_134358_2_1_6"/>
<dbReference type="Proteomes" id="UP000007067">
    <property type="component" value="Chromosome"/>
</dbReference>
<dbReference type="GO" id="GO:0030163">
    <property type="term" value="P:protein catabolic process"/>
    <property type="evidence" value="ECO:0007669"/>
    <property type="project" value="InterPro"/>
</dbReference>
<dbReference type="GO" id="GO:0006508">
    <property type="term" value="P:proteolysis"/>
    <property type="evidence" value="ECO:0007669"/>
    <property type="project" value="UniProtKB-UniRule"/>
</dbReference>
<dbReference type="FunFam" id="3.30.1390.10:FF:000002">
    <property type="entry name" value="ATP-dependent Clp protease adapter protein ClpS"/>
    <property type="match status" value="1"/>
</dbReference>
<dbReference type="Gene3D" id="3.30.1390.10">
    <property type="match status" value="1"/>
</dbReference>
<dbReference type="HAMAP" id="MF_00302">
    <property type="entry name" value="ClpS"/>
    <property type="match status" value="1"/>
</dbReference>
<dbReference type="InterPro" id="IPR022935">
    <property type="entry name" value="ClpS"/>
</dbReference>
<dbReference type="InterPro" id="IPR003769">
    <property type="entry name" value="ClpS_core"/>
</dbReference>
<dbReference type="InterPro" id="IPR014719">
    <property type="entry name" value="Ribosomal_bL12_C/ClpS-like"/>
</dbReference>
<dbReference type="NCBIfam" id="NF000670">
    <property type="entry name" value="PRK00033.1-3"/>
    <property type="match status" value="1"/>
</dbReference>
<dbReference type="NCBIfam" id="NF000672">
    <property type="entry name" value="PRK00033.1-5"/>
    <property type="match status" value="1"/>
</dbReference>
<dbReference type="PANTHER" id="PTHR33473:SF19">
    <property type="entry name" value="ATP-DEPENDENT CLP PROTEASE ADAPTER PROTEIN CLPS"/>
    <property type="match status" value="1"/>
</dbReference>
<dbReference type="PANTHER" id="PTHR33473">
    <property type="entry name" value="ATP-DEPENDENT CLP PROTEASE ADAPTER PROTEIN CLPS1, CHLOROPLASTIC"/>
    <property type="match status" value="1"/>
</dbReference>
<dbReference type="Pfam" id="PF02617">
    <property type="entry name" value="ClpS"/>
    <property type="match status" value="1"/>
</dbReference>
<dbReference type="SUPFAM" id="SSF54736">
    <property type="entry name" value="ClpS-like"/>
    <property type="match status" value="1"/>
</dbReference>
<protein>
    <recommendedName>
        <fullName evidence="1">ATP-dependent Clp protease adapter protein ClpS</fullName>
    </recommendedName>
</protein>
<reference key="1">
    <citation type="journal article" date="2005" name="Nucleic Acids Res.">
        <title>Genome dynamics and diversity of Shigella species, the etiologic agents of bacillary dysentery.</title>
        <authorList>
            <person name="Yang F."/>
            <person name="Yang J."/>
            <person name="Zhang X."/>
            <person name="Chen L."/>
            <person name="Jiang Y."/>
            <person name="Yan Y."/>
            <person name="Tang X."/>
            <person name="Wang J."/>
            <person name="Xiong Z."/>
            <person name="Dong J."/>
            <person name="Xue Y."/>
            <person name="Zhu Y."/>
            <person name="Xu X."/>
            <person name="Sun L."/>
            <person name="Chen S."/>
            <person name="Nie H."/>
            <person name="Peng J."/>
            <person name="Xu J."/>
            <person name="Wang Y."/>
            <person name="Yuan Z."/>
            <person name="Wen Y."/>
            <person name="Yao Z."/>
            <person name="Shen Y."/>
            <person name="Qiang B."/>
            <person name="Hou Y."/>
            <person name="Yu J."/>
            <person name="Jin Q."/>
        </authorList>
    </citation>
    <scope>NUCLEOTIDE SEQUENCE [LARGE SCALE GENOMIC DNA]</scope>
    <source>
        <strain>Sb227</strain>
    </source>
</reference>
<feature type="chain" id="PRO_0000300725" description="ATP-dependent Clp protease adapter protein ClpS">
    <location>
        <begin position="1"/>
        <end position="106"/>
    </location>
</feature>
<accession>Q323M1</accession>
<organism>
    <name type="scientific">Shigella boydii serotype 4 (strain Sb227)</name>
    <dbReference type="NCBI Taxonomy" id="300268"/>
    <lineage>
        <taxon>Bacteria</taxon>
        <taxon>Pseudomonadati</taxon>
        <taxon>Pseudomonadota</taxon>
        <taxon>Gammaproteobacteria</taxon>
        <taxon>Enterobacterales</taxon>
        <taxon>Enterobacteriaceae</taxon>
        <taxon>Shigella</taxon>
    </lineage>
</organism>
<gene>
    <name evidence="1" type="primary">clpS</name>
    <name type="ordered locus">SBO_0814</name>
</gene>